<gene>
    <name evidence="1" type="primary">rpmI</name>
    <name type="ordered locus">CFF8240_0114</name>
</gene>
<dbReference type="EMBL" id="CP000487">
    <property type="protein sequence ID" value="ABK82734.1"/>
    <property type="molecule type" value="Genomic_DNA"/>
</dbReference>
<dbReference type="RefSeq" id="WP_002848109.1">
    <property type="nucleotide sequence ID" value="NC_008599.1"/>
</dbReference>
<dbReference type="SMR" id="A0RM91"/>
<dbReference type="GeneID" id="61063960"/>
<dbReference type="KEGG" id="cff:CFF8240_0114"/>
<dbReference type="eggNOG" id="COG0291">
    <property type="taxonomic scope" value="Bacteria"/>
</dbReference>
<dbReference type="HOGENOM" id="CLU_169643_1_2_7"/>
<dbReference type="Proteomes" id="UP000000760">
    <property type="component" value="Chromosome"/>
</dbReference>
<dbReference type="GO" id="GO:0022625">
    <property type="term" value="C:cytosolic large ribosomal subunit"/>
    <property type="evidence" value="ECO:0007669"/>
    <property type="project" value="TreeGrafter"/>
</dbReference>
<dbReference type="GO" id="GO:0003735">
    <property type="term" value="F:structural constituent of ribosome"/>
    <property type="evidence" value="ECO:0007669"/>
    <property type="project" value="InterPro"/>
</dbReference>
<dbReference type="GO" id="GO:0006412">
    <property type="term" value="P:translation"/>
    <property type="evidence" value="ECO:0007669"/>
    <property type="project" value="UniProtKB-UniRule"/>
</dbReference>
<dbReference type="FunFam" id="4.10.410.60:FF:000001">
    <property type="entry name" value="50S ribosomal protein L35"/>
    <property type="match status" value="1"/>
</dbReference>
<dbReference type="Gene3D" id="4.10.410.60">
    <property type="match status" value="1"/>
</dbReference>
<dbReference type="HAMAP" id="MF_00514">
    <property type="entry name" value="Ribosomal_bL35"/>
    <property type="match status" value="1"/>
</dbReference>
<dbReference type="InterPro" id="IPR001706">
    <property type="entry name" value="Ribosomal_bL35"/>
</dbReference>
<dbReference type="InterPro" id="IPR021137">
    <property type="entry name" value="Ribosomal_bL35-like"/>
</dbReference>
<dbReference type="InterPro" id="IPR018265">
    <property type="entry name" value="Ribosomal_bL35_CS"/>
</dbReference>
<dbReference type="InterPro" id="IPR037229">
    <property type="entry name" value="Ribosomal_bL35_sf"/>
</dbReference>
<dbReference type="NCBIfam" id="TIGR00001">
    <property type="entry name" value="rpmI_bact"/>
    <property type="match status" value="1"/>
</dbReference>
<dbReference type="PANTHER" id="PTHR33343">
    <property type="entry name" value="54S RIBOSOMAL PROTEIN BL35M"/>
    <property type="match status" value="1"/>
</dbReference>
<dbReference type="PANTHER" id="PTHR33343:SF1">
    <property type="entry name" value="LARGE RIBOSOMAL SUBUNIT PROTEIN BL35M"/>
    <property type="match status" value="1"/>
</dbReference>
<dbReference type="Pfam" id="PF01632">
    <property type="entry name" value="Ribosomal_L35p"/>
    <property type="match status" value="1"/>
</dbReference>
<dbReference type="PRINTS" id="PR00064">
    <property type="entry name" value="RIBOSOMALL35"/>
</dbReference>
<dbReference type="SUPFAM" id="SSF143034">
    <property type="entry name" value="L35p-like"/>
    <property type="match status" value="1"/>
</dbReference>
<dbReference type="PROSITE" id="PS00936">
    <property type="entry name" value="RIBOSOMAL_L35"/>
    <property type="match status" value="1"/>
</dbReference>
<accession>A0RM91</accession>
<comment type="similarity">
    <text evidence="1">Belongs to the bacterial ribosomal protein bL35 family.</text>
</comment>
<evidence type="ECO:0000255" key="1">
    <source>
        <dbReference type="HAMAP-Rule" id="MF_00514"/>
    </source>
</evidence>
<evidence type="ECO:0000305" key="2"/>
<name>RL35_CAMFF</name>
<feature type="chain" id="PRO_1000050674" description="Large ribosomal subunit protein bL35">
    <location>
        <begin position="1"/>
        <end position="63"/>
    </location>
</feature>
<reference key="1">
    <citation type="submission" date="2006-11" db="EMBL/GenBank/DDBJ databases">
        <title>Sequence of Campylobacter fetus subsp. fetus 82-40.</title>
        <authorList>
            <person name="Fouts D.E."/>
            <person name="Nelson K.E."/>
        </authorList>
    </citation>
    <scope>NUCLEOTIDE SEQUENCE [LARGE SCALE GENOMIC DNA]</scope>
    <source>
        <strain>82-40</strain>
    </source>
</reference>
<organism>
    <name type="scientific">Campylobacter fetus subsp. fetus (strain 82-40)</name>
    <dbReference type="NCBI Taxonomy" id="360106"/>
    <lineage>
        <taxon>Bacteria</taxon>
        <taxon>Pseudomonadati</taxon>
        <taxon>Campylobacterota</taxon>
        <taxon>Epsilonproteobacteria</taxon>
        <taxon>Campylobacterales</taxon>
        <taxon>Campylobacteraceae</taxon>
        <taxon>Campylobacter</taxon>
    </lineage>
</organism>
<proteinExistence type="inferred from homology"/>
<protein>
    <recommendedName>
        <fullName evidence="1">Large ribosomal subunit protein bL35</fullName>
    </recommendedName>
    <alternativeName>
        <fullName evidence="2">50S ribosomal protein L35</fullName>
    </alternativeName>
</protein>
<keyword id="KW-0687">Ribonucleoprotein</keyword>
<keyword id="KW-0689">Ribosomal protein</keyword>
<sequence>MPKMKSVRGAAKRFKVGKNKIKRGSAFRSHILTKKPSKRMRDLRQSQYVDSTNVSAVKKMLCI</sequence>